<proteinExistence type="evidence at protein level"/>
<feature type="signal peptide" evidence="3 10">
    <location>
        <begin position="1"/>
        <end position="28"/>
    </location>
</feature>
<feature type="chain" id="PRO_0000006012" description="Zona pellucida sperm-binding protein 3 receptor">
    <location>
        <begin position="29"/>
        <end position="533"/>
    </location>
</feature>
<feature type="domain" description="Sushi 1" evidence="4 9">
    <location>
        <begin position="29"/>
        <end position="88"/>
    </location>
</feature>
<feature type="domain" description="Sushi 2" evidence="4 9">
    <location>
        <begin position="89"/>
        <end position="150"/>
    </location>
</feature>
<feature type="domain" description="Sushi 3" evidence="4 9">
    <location>
        <begin position="151"/>
        <end position="215"/>
    </location>
</feature>
<feature type="domain" description="Sushi 4" evidence="4 9">
    <location>
        <begin position="216"/>
        <end position="275"/>
    </location>
</feature>
<feature type="domain" description="Sushi 5" evidence="4 9">
    <location>
        <begin position="276"/>
        <end position="342"/>
    </location>
</feature>
<feature type="domain" description="Sushi 6" evidence="4 9">
    <location>
        <begin position="343"/>
        <end position="408"/>
    </location>
</feature>
<feature type="domain" description="Sushi 7" evidence="4 9">
    <location>
        <begin position="409"/>
        <end position="467"/>
    </location>
</feature>
<feature type="glycosylation site" description="N-linked (GlcNAc...) asparagine" evidence="9">
    <location>
        <position position="68"/>
    </location>
</feature>
<feature type="glycosylation site" description="N-linked (GlcNAc...) asparagine" evidence="9">
    <location>
        <position position="77"/>
    </location>
</feature>
<feature type="glycosylation site" description="N-linked (GlcNAc...) asparagine" evidence="9">
    <location>
        <position position="185"/>
    </location>
</feature>
<feature type="glycosylation site" description="N-linked (GlcNAc...) asparagine" evidence="9">
    <location>
        <position position="191"/>
    </location>
</feature>
<feature type="glycosylation site" description="N-linked (GlcNAc...) asparagine" evidence="9">
    <location>
        <position position="200"/>
    </location>
</feature>
<feature type="glycosylation site" description="N-linked (GlcNAc...) asparagine" evidence="9">
    <location>
        <position position="433"/>
    </location>
</feature>
<feature type="glycosylation site" description="N-linked (GlcNAc...) asparagine" evidence="9">
    <location>
        <position position="455"/>
    </location>
</feature>
<feature type="disulfide bond" evidence="1 4">
    <location>
        <begin position="30"/>
        <end position="74"/>
    </location>
</feature>
<feature type="disulfide bond" evidence="2 4">
    <location>
        <begin position="60"/>
        <end position="86"/>
    </location>
</feature>
<feature type="disulfide bond" evidence="2 4">
    <location>
        <begin position="91"/>
        <end position="132"/>
    </location>
</feature>
<feature type="disulfide bond" evidence="2 4">
    <location>
        <begin position="118"/>
        <end position="148"/>
    </location>
</feature>
<feature type="disulfide bond" evidence="2 4">
    <location>
        <begin position="153"/>
        <end position="196"/>
    </location>
</feature>
<feature type="disulfide bond" evidence="2 4">
    <location>
        <begin position="182"/>
        <end position="213"/>
    </location>
</feature>
<feature type="disulfide bond" evidence="1 4">
    <location>
        <begin position="218"/>
        <end position="260"/>
    </location>
</feature>
<feature type="disulfide bond" evidence="1 4">
    <location>
        <begin position="246"/>
        <end position="273"/>
    </location>
</feature>
<feature type="disulfide bond" evidence="1 4">
    <location>
        <begin position="278"/>
        <end position="328"/>
    </location>
</feature>
<feature type="disulfide bond" evidence="1 4">
    <location>
        <begin position="312"/>
        <end position="340"/>
    </location>
</feature>
<feature type="disulfide bond" evidence="1 4">
    <location>
        <begin position="345"/>
        <end position="393"/>
    </location>
</feature>
<feature type="disulfide bond" evidence="1 4">
    <location>
        <begin position="378"/>
        <end position="406"/>
    </location>
</feature>
<feature type="disulfide bond" evidence="1 4">
    <location>
        <begin position="411"/>
        <end position="452"/>
    </location>
</feature>
<feature type="disulfide bond" evidence="1 4">
    <location>
        <begin position="438"/>
        <end position="465"/>
    </location>
</feature>
<gene>
    <name type="primary">ZP3R</name>
</gene>
<organism evidence="10">
    <name type="scientific">Cavia porcellus</name>
    <name type="common">Guinea pig</name>
    <dbReference type="NCBI Taxonomy" id="10141"/>
    <lineage>
        <taxon>Eukaryota</taxon>
        <taxon>Metazoa</taxon>
        <taxon>Chordata</taxon>
        <taxon>Craniata</taxon>
        <taxon>Vertebrata</taxon>
        <taxon>Euteleostomi</taxon>
        <taxon>Mammalia</taxon>
        <taxon>Eutheria</taxon>
        <taxon>Euarchontoglires</taxon>
        <taxon>Glires</taxon>
        <taxon>Rodentia</taxon>
        <taxon>Hystricomorpha</taxon>
        <taxon>Caviidae</taxon>
        <taxon>Cavia</taxon>
    </lineage>
</organism>
<evidence type="ECO:0000250" key="1">
    <source>
        <dbReference type="UniProtKB" id="P04003"/>
    </source>
</evidence>
<evidence type="ECO:0000250" key="2">
    <source>
        <dbReference type="UniProtKB" id="P08174"/>
    </source>
</evidence>
<evidence type="ECO:0000255" key="3"/>
<evidence type="ECO:0000255" key="4">
    <source>
        <dbReference type="PROSITE-ProRule" id="PRU00302"/>
    </source>
</evidence>
<evidence type="ECO:0000269" key="5">
    <source>
    </source>
</evidence>
<evidence type="ECO:0000269" key="6">
    <source>
    </source>
</evidence>
<evidence type="ECO:0000303" key="7">
    <source>
    </source>
</evidence>
<evidence type="ECO:0000303" key="8">
    <source>
    </source>
</evidence>
<evidence type="ECO:0000305" key="9"/>
<evidence type="ECO:0000312" key="10">
    <source>
        <dbReference type="EMBL" id="AAC13888.1"/>
    </source>
</evidence>
<comment type="function">
    <text evidence="8">Probably involved in the formation of the dense core and M1 domain of the acrosome. May also regulate the release of certain secretory proteins following the acrosomal reaction.</text>
</comment>
<comment type="subunit">
    <text evidence="6 8">Homooligomer; disulfide-linked. May contain 6-8 monomers per oligomer.</text>
</comment>
<comment type="subcellular location">
    <subcellularLocation>
        <location evidence="6">Cytoplasmic vesicle</location>
        <location evidence="6">Secretory vesicle</location>
        <location evidence="6">Acrosome lumen</location>
    </subcellularLocation>
    <text>Sperm acrosomal matrix. Restricted to the M1 domain of the apical segment of the acrosome.</text>
</comment>
<comment type="tissue specificity">
    <text evidence="6">Testis. Not expressed in heart, brain, liver or kidney.</text>
</comment>
<comment type="PTM">
    <text evidence="7">The N-terminus may be blocked.</text>
</comment>
<keyword id="KW-0968">Cytoplasmic vesicle</keyword>
<keyword id="KW-0903">Direct protein sequencing</keyword>
<keyword id="KW-1015">Disulfide bond</keyword>
<keyword id="KW-0278">Fertilization</keyword>
<keyword id="KW-0325">Glycoprotein</keyword>
<keyword id="KW-1185">Reference proteome</keyword>
<keyword id="KW-0677">Repeat</keyword>
<keyword id="KW-0732">Signal</keyword>
<keyword id="KW-0768">Sushi</keyword>
<accession>O08569</accession>
<name>ZP3R_CAVPO</name>
<protein>
    <recommendedName>
        <fullName>Zona pellucida sperm-binding protein 3 receptor</fullName>
    </recommendedName>
    <alternativeName>
        <fullName>Acrosomal matrix component 67</fullName>
        <shortName>Protein AM67</shortName>
        <shortName>p67</shortName>
    </alternativeName>
</protein>
<dbReference type="EMBL" id="U75654">
    <property type="protein sequence ID" value="AAC13888.1"/>
    <property type="molecule type" value="mRNA"/>
</dbReference>
<dbReference type="RefSeq" id="NP_001166498.1">
    <property type="nucleotide sequence ID" value="NM_001173027.1"/>
</dbReference>
<dbReference type="SMR" id="O08569"/>
<dbReference type="FunCoup" id="O08569">
    <property type="interactions" value="30"/>
</dbReference>
<dbReference type="STRING" id="10141.ENSCPOP00000005657"/>
<dbReference type="GlyCosmos" id="O08569">
    <property type="glycosylation" value="7 sites, No reported glycans"/>
</dbReference>
<dbReference type="Ensembl" id="ENSCPOT00000006339.3">
    <property type="protein sequence ID" value="ENSCPOP00000005657.2"/>
    <property type="gene ID" value="ENSCPOG00000006274.4"/>
</dbReference>
<dbReference type="GeneID" id="100135632"/>
<dbReference type="KEGG" id="cpoc:100135632"/>
<dbReference type="CTD" id="22789"/>
<dbReference type="VEuPathDB" id="HostDB:ENSCPOG00000006274"/>
<dbReference type="eggNOG" id="ENOG502SHRK">
    <property type="taxonomic scope" value="Eukaryota"/>
</dbReference>
<dbReference type="GeneTree" id="ENSGT00940000154640"/>
<dbReference type="HOGENOM" id="CLU_020107_5_2_1"/>
<dbReference type="InParanoid" id="O08569"/>
<dbReference type="OMA" id="QEFYTYA"/>
<dbReference type="OrthoDB" id="8961654at2759"/>
<dbReference type="TreeFam" id="TF334137"/>
<dbReference type="Proteomes" id="UP000005447">
    <property type="component" value="Unassembled WGS sequence"/>
</dbReference>
<dbReference type="Bgee" id="ENSCPOG00000006274">
    <property type="expression patterns" value="Expressed in testis and 2 other cell types or tissues"/>
</dbReference>
<dbReference type="GO" id="GO:0043160">
    <property type="term" value="C:acrosomal lumen"/>
    <property type="evidence" value="ECO:0007669"/>
    <property type="project" value="UniProtKB-SubCell"/>
</dbReference>
<dbReference type="GO" id="GO:0043159">
    <property type="term" value="C:acrosomal matrix"/>
    <property type="evidence" value="ECO:0000314"/>
    <property type="project" value="UniProtKB"/>
</dbReference>
<dbReference type="GO" id="GO:0005198">
    <property type="term" value="F:structural molecule activity"/>
    <property type="evidence" value="ECO:0000303"/>
    <property type="project" value="UniProtKB"/>
</dbReference>
<dbReference type="GO" id="GO:0007340">
    <property type="term" value="P:acrosome reaction"/>
    <property type="evidence" value="ECO:0000303"/>
    <property type="project" value="UniProtKB"/>
</dbReference>
<dbReference type="GO" id="GO:0006996">
    <property type="term" value="P:organelle organization"/>
    <property type="evidence" value="ECO:0000303"/>
    <property type="project" value="UniProtKB"/>
</dbReference>
<dbReference type="CDD" id="cd00033">
    <property type="entry name" value="CCP"/>
    <property type="match status" value="7"/>
</dbReference>
<dbReference type="FunFam" id="2.10.70.10:FF:000055">
    <property type="entry name" value="Complement decay-accelerating factor, GPI-anchored"/>
    <property type="match status" value="1"/>
</dbReference>
<dbReference type="FunFam" id="2.10.70.10:FF:000014">
    <property type="entry name" value="Membrane cofactor protein"/>
    <property type="match status" value="2"/>
</dbReference>
<dbReference type="FunFam" id="2.10.70.10:FF:000095">
    <property type="entry name" value="Zona pellucida sperm-binding protein 3 receptor"/>
    <property type="match status" value="1"/>
</dbReference>
<dbReference type="FunFam" id="2.10.70.10:FF:000115">
    <property type="entry name" value="Zona pellucida sperm-binding protein 3 receptor"/>
    <property type="match status" value="1"/>
</dbReference>
<dbReference type="Gene3D" id="1.20.5.3730">
    <property type="match status" value="1"/>
</dbReference>
<dbReference type="Gene3D" id="2.20.28.230">
    <property type="match status" value="1"/>
</dbReference>
<dbReference type="Gene3D" id="2.10.70.10">
    <property type="entry name" value="Complement Module, domain 1"/>
    <property type="match status" value="6"/>
</dbReference>
<dbReference type="InterPro" id="IPR040514">
    <property type="entry name" value="C4bp_oligo"/>
</dbReference>
<dbReference type="InterPro" id="IPR050350">
    <property type="entry name" value="Compl-Cell_Adhes-Reg"/>
</dbReference>
<dbReference type="InterPro" id="IPR035976">
    <property type="entry name" value="Sushi/SCR/CCP_sf"/>
</dbReference>
<dbReference type="InterPro" id="IPR000436">
    <property type="entry name" value="Sushi_SCR_CCP_dom"/>
</dbReference>
<dbReference type="PANTHER" id="PTHR19325">
    <property type="entry name" value="COMPLEMENT COMPONENT-RELATED SUSHI DOMAIN-CONTAINING"/>
    <property type="match status" value="1"/>
</dbReference>
<dbReference type="PANTHER" id="PTHR19325:SF575">
    <property type="entry name" value="LOCOMOTION-RELATED PROTEIN HIKARU GENKI"/>
    <property type="match status" value="1"/>
</dbReference>
<dbReference type="Pfam" id="PF18453">
    <property type="entry name" value="C4bp_oligo"/>
    <property type="match status" value="1"/>
</dbReference>
<dbReference type="Pfam" id="PF00084">
    <property type="entry name" value="Sushi"/>
    <property type="match status" value="7"/>
</dbReference>
<dbReference type="SMART" id="SM00032">
    <property type="entry name" value="CCP"/>
    <property type="match status" value="7"/>
</dbReference>
<dbReference type="SUPFAM" id="SSF57535">
    <property type="entry name" value="Complement control module/SCR domain"/>
    <property type="match status" value="7"/>
</dbReference>
<dbReference type="PROSITE" id="PS50923">
    <property type="entry name" value="SUSHI"/>
    <property type="match status" value="7"/>
</dbReference>
<sequence>MFPRLQAVSAPALLQITLMAVLLAPVLGDCGPPPILPFASPVIQSYETNFRTGTALKYNCHRGYWRVNSSHVICDINGSWIYNVFCAKKRCRNPGELANGKVEIITDLLFGSTIEFSCSKGYSLIGSTTSQCESQGKTVDWSDPLPECVIVKCDSPPDISNGKHSGTDEDLYTYGSLVTYVCDPNYSLLGNASISCLVANKTVGVWSSNPPTCEKVICRQPHIPKGIFLSGFGFYYTYKDTLVISCKKGYILRGSSIIHCEANSKWYPSIPTCEPNGCIDLPEVPYISWERNVLSLKNQEIFEIGSLLKYDCKTGYRPTPNEPRTVTCQENLKWAISKGCERVCCPTPNMEKMRIINERRDFTGVCVYAYEDYIFYMCDEGYYPISADGRSSCQADGMWNPKMPACESAVCLKPDILNGKLSVEKDHYTETENVTIHCDSGYEVVGPQNIICSENRTWTPEIPKCEWEVPEECKQVAAGRKLLECLPNPSDVKMALEVYKLSLEIEQLEKEKYVKIQEKFSKKEMKQLTSALH</sequence>
<reference evidence="9" key="1">
    <citation type="journal article" date="1997" name="J. Biol. Chem.">
        <title>AM67, a secretory component of the guinea pig sperm acrosomal matrix, is related to mouse sperm protein sp56 and the complement component 4-binding proteins.</title>
        <authorList>
            <person name="Foster J.A."/>
            <person name="Friday B.B."/>
            <person name="Maulit M.T."/>
            <person name="Blobel C."/>
            <person name="Winfrey V.P."/>
            <person name="Olson G.E."/>
            <person name="Kim K.-S."/>
            <person name="Gerton G.L."/>
        </authorList>
    </citation>
    <scope>NUCLEOTIDE SEQUENCE [MRNA]</scope>
    <scope>PROTEIN SEQUENCE OF 298-309; 334-338; 361-390 AND 457-474</scope>
    <scope>FUNCTION</scope>
    <scope>SUBUNIT</scope>
    <scope>SUBCELLULAR LOCATION</scope>
    <scope>TISSUE SPECIFICITY</scope>
    <source>
        <strain evidence="10">Hartley</strain>
        <tissue evidence="10">Testis</tissue>
    </source>
</reference>
<reference evidence="9" key="2">
    <citation type="journal article" date="1994" name="J. Biol. Chem.">
        <title>The sperm acrosomal matrix contains a novel member of the pentaxin family of calcium-dependent binding proteins.</title>
        <authorList>
            <person name="Noland T.D."/>
            <person name="Friday B.B."/>
            <person name="Maulit M.T."/>
            <person name="Gerton G.L."/>
        </authorList>
    </citation>
    <scope>PROTEIN SEQUENCE OF 494-513</scope>
    <source>
        <tissue evidence="5">Sperm</tissue>
    </source>
</reference>